<gene>
    <name evidence="1" type="primary">rpsR</name>
    <name type="ordered locus">ABO_2189</name>
</gene>
<feature type="chain" id="PRO_1000003438" description="Small ribosomal subunit protein bS18">
    <location>
        <begin position="1"/>
        <end position="76"/>
    </location>
</feature>
<proteinExistence type="inferred from homology"/>
<protein>
    <recommendedName>
        <fullName evidence="1">Small ribosomal subunit protein bS18</fullName>
    </recommendedName>
    <alternativeName>
        <fullName evidence="2">30S ribosomal protein S18</fullName>
    </alternativeName>
</protein>
<keyword id="KW-1185">Reference proteome</keyword>
<keyword id="KW-0687">Ribonucleoprotein</keyword>
<keyword id="KW-0689">Ribosomal protein</keyword>
<keyword id="KW-0694">RNA-binding</keyword>
<keyword id="KW-0699">rRNA-binding</keyword>
<name>RS18_ALCBS</name>
<dbReference type="EMBL" id="AM286690">
    <property type="protein sequence ID" value="CAL17637.1"/>
    <property type="molecule type" value="Genomic_DNA"/>
</dbReference>
<dbReference type="RefSeq" id="WP_007148676.1">
    <property type="nucleotide sequence ID" value="NC_008260.1"/>
</dbReference>
<dbReference type="SMR" id="Q0VMG1"/>
<dbReference type="STRING" id="393595.ABO_2189"/>
<dbReference type="KEGG" id="abo:ABO_2189"/>
<dbReference type="eggNOG" id="COG0238">
    <property type="taxonomic scope" value="Bacteria"/>
</dbReference>
<dbReference type="HOGENOM" id="CLU_148710_2_3_6"/>
<dbReference type="OrthoDB" id="9812008at2"/>
<dbReference type="Proteomes" id="UP000008871">
    <property type="component" value="Chromosome"/>
</dbReference>
<dbReference type="GO" id="GO:0022627">
    <property type="term" value="C:cytosolic small ribosomal subunit"/>
    <property type="evidence" value="ECO:0007669"/>
    <property type="project" value="TreeGrafter"/>
</dbReference>
<dbReference type="GO" id="GO:0070181">
    <property type="term" value="F:small ribosomal subunit rRNA binding"/>
    <property type="evidence" value="ECO:0007669"/>
    <property type="project" value="TreeGrafter"/>
</dbReference>
<dbReference type="GO" id="GO:0003735">
    <property type="term" value="F:structural constituent of ribosome"/>
    <property type="evidence" value="ECO:0007669"/>
    <property type="project" value="InterPro"/>
</dbReference>
<dbReference type="GO" id="GO:0006412">
    <property type="term" value="P:translation"/>
    <property type="evidence" value="ECO:0007669"/>
    <property type="project" value="UniProtKB-UniRule"/>
</dbReference>
<dbReference type="FunFam" id="4.10.640.10:FF:000001">
    <property type="entry name" value="30S ribosomal protein S18"/>
    <property type="match status" value="1"/>
</dbReference>
<dbReference type="Gene3D" id="4.10.640.10">
    <property type="entry name" value="Ribosomal protein S18"/>
    <property type="match status" value="1"/>
</dbReference>
<dbReference type="HAMAP" id="MF_00270">
    <property type="entry name" value="Ribosomal_bS18"/>
    <property type="match status" value="1"/>
</dbReference>
<dbReference type="InterPro" id="IPR001648">
    <property type="entry name" value="Ribosomal_bS18"/>
</dbReference>
<dbReference type="InterPro" id="IPR018275">
    <property type="entry name" value="Ribosomal_bS18_CS"/>
</dbReference>
<dbReference type="InterPro" id="IPR036870">
    <property type="entry name" value="Ribosomal_bS18_sf"/>
</dbReference>
<dbReference type="NCBIfam" id="TIGR00165">
    <property type="entry name" value="S18"/>
    <property type="match status" value="1"/>
</dbReference>
<dbReference type="PANTHER" id="PTHR13479">
    <property type="entry name" value="30S RIBOSOMAL PROTEIN S18"/>
    <property type="match status" value="1"/>
</dbReference>
<dbReference type="PANTHER" id="PTHR13479:SF40">
    <property type="entry name" value="SMALL RIBOSOMAL SUBUNIT PROTEIN BS18M"/>
    <property type="match status" value="1"/>
</dbReference>
<dbReference type="Pfam" id="PF01084">
    <property type="entry name" value="Ribosomal_S18"/>
    <property type="match status" value="1"/>
</dbReference>
<dbReference type="PRINTS" id="PR00974">
    <property type="entry name" value="RIBOSOMALS18"/>
</dbReference>
<dbReference type="SUPFAM" id="SSF46911">
    <property type="entry name" value="Ribosomal protein S18"/>
    <property type="match status" value="1"/>
</dbReference>
<dbReference type="PROSITE" id="PS00057">
    <property type="entry name" value="RIBOSOMAL_S18"/>
    <property type="match status" value="1"/>
</dbReference>
<comment type="function">
    <text evidence="1">Binds as a heterodimer with protein bS6 to the central domain of the 16S rRNA, where it helps stabilize the platform of the 30S subunit.</text>
</comment>
<comment type="subunit">
    <text evidence="1">Part of the 30S ribosomal subunit. Forms a tight heterodimer with protein bS6.</text>
</comment>
<comment type="similarity">
    <text evidence="1">Belongs to the bacterial ribosomal protein bS18 family.</text>
</comment>
<sequence>MARFYRRRKFCRFTAEGVEYIDYKDLDTLKAYITETGKIVPSRITGTKARYQRQLASAIKQARFLALLPYSDSHDN</sequence>
<organism>
    <name type="scientific">Alcanivorax borkumensis (strain ATCC 700651 / DSM 11573 / NCIMB 13689 / SK2)</name>
    <dbReference type="NCBI Taxonomy" id="393595"/>
    <lineage>
        <taxon>Bacteria</taxon>
        <taxon>Pseudomonadati</taxon>
        <taxon>Pseudomonadota</taxon>
        <taxon>Gammaproteobacteria</taxon>
        <taxon>Oceanospirillales</taxon>
        <taxon>Alcanivoracaceae</taxon>
        <taxon>Alcanivorax</taxon>
    </lineage>
</organism>
<reference key="1">
    <citation type="journal article" date="2006" name="Nat. Biotechnol.">
        <title>Genome sequence of the ubiquitous hydrocarbon-degrading marine bacterium Alcanivorax borkumensis.</title>
        <authorList>
            <person name="Schneiker S."/>
            <person name="Martins dos Santos V.A.P."/>
            <person name="Bartels D."/>
            <person name="Bekel T."/>
            <person name="Brecht M."/>
            <person name="Buhrmester J."/>
            <person name="Chernikova T.N."/>
            <person name="Denaro R."/>
            <person name="Ferrer M."/>
            <person name="Gertler C."/>
            <person name="Goesmann A."/>
            <person name="Golyshina O.V."/>
            <person name="Kaminski F."/>
            <person name="Khachane A.N."/>
            <person name="Lang S."/>
            <person name="Linke B."/>
            <person name="McHardy A.C."/>
            <person name="Meyer F."/>
            <person name="Nechitaylo T."/>
            <person name="Puehler A."/>
            <person name="Regenhardt D."/>
            <person name="Rupp O."/>
            <person name="Sabirova J.S."/>
            <person name="Selbitschka W."/>
            <person name="Yakimov M.M."/>
            <person name="Timmis K.N."/>
            <person name="Vorhoelter F.-J."/>
            <person name="Weidner S."/>
            <person name="Kaiser O."/>
            <person name="Golyshin P.N."/>
        </authorList>
    </citation>
    <scope>NUCLEOTIDE SEQUENCE [LARGE SCALE GENOMIC DNA]</scope>
    <source>
        <strain>ATCC 700651 / DSM 11573 / NCIMB 13689 / SK2</strain>
    </source>
</reference>
<evidence type="ECO:0000255" key="1">
    <source>
        <dbReference type="HAMAP-Rule" id="MF_00270"/>
    </source>
</evidence>
<evidence type="ECO:0000305" key="2"/>
<accession>Q0VMG1</accession>